<feature type="chain" id="PRO_0000231008" description="Sestrin-1">
    <location>
        <begin position="1"/>
        <end position="492"/>
    </location>
</feature>
<feature type="region of interest" description="N-terminal domain; may mediate the alkylhydroperoxide reductase activity" evidence="1">
    <location>
        <begin position="71"/>
        <end position="252"/>
    </location>
</feature>
<feature type="region of interest" description="C-terminal domain; mediates TORC1 regulation" evidence="1">
    <location>
        <begin position="321"/>
        <end position="492"/>
    </location>
</feature>
<feature type="active site" description="Cysteine sulfenic acid (-SOH) intermediate" evidence="1">
    <location>
        <position position="130"/>
    </location>
</feature>
<feature type="binding site" evidence="1">
    <location>
        <begin position="386"/>
        <end position="389"/>
    </location>
    <ligand>
        <name>L-leucine</name>
        <dbReference type="ChEBI" id="CHEBI:57427"/>
    </ligand>
</feature>
<feature type="binding site" evidence="1">
    <location>
        <position position="398"/>
    </location>
    <ligand>
        <name>L-leucine</name>
        <dbReference type="ChEBI" id="CHEBI:57427"/>
    </ligand>
</feature>
<feature type="binding site" evidence="1">
    <location>
        <position position="463"/>
    </location>
    <ligand>
        <name>L-leucine</name>
        <dbReference type="ChEBI" id="CHEBI:57427"/>
    </ligand>
</feature>
<feature type="modified residue" description="Phosphoserine" evidence="2">
    <location>
        <position position="293"/>
    </location>
</feature>
<feature type="modified residue" description="Phosphoserine" evidence="2">
    <location>
        <position position="314"/>
    </location>
</feature>
<proteinExistence type="evidence at transcript level"/>
<sequence>MRLATAANEAYTAPLAVSELLGCKQCGGGRDHDEELGIRIPRPLGQGPSRFIPEKEILQVGSEDAQMHALFADSFAALGRLDNITLVMVFHPQYLESFLKTQHYLLQMDGPLPLHYRHYIGIMAAARHQCSYLVNLHVNDFLHVGGDPKWLNGLENAPQKLQNLGELNKVLAHRPWLITKEHIEGLLKAEEHSWSLAELVHAVVLLTHYHSLASFTFGCGISPEIHCDGGHTFRPPSVSNYCICDITNGNHSVDEMPVNSAENVSVSDSFFEVEALMEKMRQLQECRDEEEASQEEMASRFEIEKRESMFVFSSDDDEVTPARDVSRHFEDTSYGYKDFSRHGMHVPTFRVQDYCWEDHGYSLVNRLYPDVGQLIDEKFHIAYNLTYNTMAMHKDVDTSMLRRAIWNYIHCMFGIRYDDYDYGEINQLLDRSFKVYIKTVVCTPEKVTKRMYESFWRQFKHSEKVHVNLLLIEARMQAELLYALRAITRYMT</sequence>
<name>SESN1_MACFA</name>
<accession>Q4R6P7</accession>
<reference key="1">
    <citation type="submission" date="2005-06" db="EMBL/GenBank/DDBJ databases">
        <title>DNA sequences of macaque genes expressed in brain or testis and its evolutionary implications.</title>
        <authorList>
            <consortium name="International consortium for macaque cDNA sequencing and analysis"/>
        </authorList>
    </citation>
    <scope>NUCLEOTIDE SEQUENCE [LARGE SCALE MRNA]</scope>
    <source>
        <tissue>Testis</tissue>
    </source>
</reference>
<organism>
    <name type="scientific">Macaca fascicularis</name>
    <name type="common">Crab-eating macaque</name>
    <name type="synonym">Cynomolgus monkey</name>
    <dbReference type="NCBI Taxonomy" id="9541"/>
    <lineage>
        <taxon>Eukaryota</taxon>
        <taxon>Metazoa</taxon>
        <taxon>Chordata</taxon>
        <taxon>Craniata</taxon>
        <taxon>Vertebrata</taxon>
        <taxon>Euteleostomi</taxon>
        <taxon>Mammalia</taxon>
        <taxon>Eutheria</taxon>
        <taxon>Euarchontoglires</taxon>
        <taxon>Primates</taxon>
        <taxon>Haplorrhini</taxon>
        <taxon>Catarrhini</taxon>
        <taxon>Cercopithecidae</taxon>
        <taxon>Cercopithecinae</taxon>
        <taxon>Macaca</taxon>
    </lineage>
</organism>
<dbReference type="EC" id="1.11.1.-" evidence="1"/>
<dbReference type="EMBL" id="AB169134">
    <property type="protein sequence ID" value="BAE01227.1"/>
    <property type="molecule type" value="mRNA"/>
</dbReference>
<dbReference type="RefSeq" id="XP_015303861.1">
    <property type="nucleotide sequence ID" value="XM_015448375.1"/>
</dbReference>
<dbReference type="SMR" id="Q4R6P7"/>
<dbReference type="STRING" id="9541.ENSMFAP00000016087"/>
<dbReference type="GeneID" id="101865915"/>
<dbReference type="KEGG" id="mcf:101865915"/>
<dbReference type="CTD" id="27244"/>
<dbReference type="VEuPathDB" id="HostDB:ENSMFAG00000031220"/>
<dbReference type="eggNOG" id="KOG3746">
    <property type="taxonomic scope" value="Eukaryota"/>
</dbReference>
<dbReference type="OMA" id="CDQVTQV"/>
<dbReference type="Proteomes" id="UP000233100">
    <property type="component" value="Chromosome 4"/>
</dbReference>
<dbReference type="GO" id="GO:0005737">
    <property type="term" value="C:cytoplasm"/>
    <property type="evidence" value="ECO:0000250"/>
    <property type="project" value="UniProtKB"/>
</dbReference>
<dbReference type="GO" id="GO:0005634">
    <property type="term" value="C:nucleus"/>
    <property type="evidence" value="ECO:0000250"/>
    <property type="project" value="UniProtKB"/>
</dbReference>
<dbReference type="GO" id="GO:0070728">
    <property type="term" value="F:L-leucine binding"/>
    <property type="evidence" value="ECO:0000250"/>
    <property type="project" value="UniProtKB"/>
</dbReference>
<dbReference type="GO" id="GO:0016684">
    <property type="term" value="F:oxidoreductase activity, acting on peroxide as acceptor"/>
    <property type="evidence" value="ECO:0007669"/>
    <property type="project" value="TreeGrafter"/>
</dbReference>
<dbReference type="GO" id="GO:0098869">
    <property type="term" value="P:cellular oxidant detoxification"/>
    <property type="evidence" value="ECO:0000250"/>
    <property type="project" value="UniProtKB"/>
</dbReference>
<dbReference type="GO" id="GO:0034198">
    <property type="term" value="P:cellular response to amino acid starvation"/>
    <property type="evidence" value="ECO:0000250"/>
    <property type="project" value="UniProtKB"/>
</dbReference>
<dbReference type="GO" id="GO:0071233">
    <property type="term" value="P:cellular response to L-leucine"/>
    <property type="evidence" value="ECO:0007669"/>
    <property type="project" value="TreeGrafter"/>
</dbReference>
<dbReference type="GO" id="GO:1990253">
    <property type="term" value="P:cellular response to leucine starvation"/>
    <property type="evidence" value="ECO:0007669"/>
    <property type="project" value="TreeGrafter"/>
</dbReference>
<dbReference type="GO" id="GO:1904262">
    <property type="term" value="P:negative regulation of TORC1 signaling"/>
    <property type="evidence" value="ECO:0000250"/>
    <property type="project" value="UniProtKB"/>
</dbReference>
<dbReference type="GO" id="GO:0016239">
    <property type="term" value="P:positive regulation of macroautophagy"/>
    <property type="evidence" value="ECO:0007669"/>
    <property type="project" value="TreeGrafter"/>
</dbReference>
<dbReference type="GO" id="GO:0072593">
    <property type="term" value="P:reactive oxygen species metabolic process"/>
    <property type="evidence" value="ECO:0000250"/>
    <property type="project" value="UniProtKB"/>
</dbReference>
<dbReference type="GO" id="GO:1901031">
    <property type="term" value="P:regulation of response to reactive oxygen species"/>
    <property type="evidence" value="ECO:0007669"/>
    <property type="project" value="InterPro"/>
</dbReference>
<dbReference type="FunFam" id="1.20.1290.10:FF:000001">
    <property type="entry name" value="Sestrin 1"/>
    <property type="match status" value="1"/>
</dbReference>
<dbReference type="Gene3D" id="1.20.1290.10">
    <property type="entry name" value="AhpD-like"/>
    <property type="match status" value="1"/>
</dbReference>
<dbReference type="InterPro" id="IPR029032">
    <property type="entry name" value="AhpD-like"/>
</dbReference>
<dbReference type="InterPro" id="IPR006730">
    <property type="entry name" value="Sestrin"/>
</dbReference>
<dbReference type="PANTHER" id="PTHR12474">
    <property type="entry name" value="P53 REGULATED PA26 NUCLEAR PROTEIN SESTRIN"/>
    <property type="match status" value="1"/>
</dbReference>
<dbReference type="PANTHER" id="PTHR12474:SF3">
    <property type="entry name" value="SESTRIN-1"/>
    <property type="match status" value="1"/>
</dbReference>
<dbReference type="Pfam" id="PF04636">
    <property type="entry name" value="PA26"/>
    <property type="match status" value="1"/>
</dbReference>
<dbReference type="SUPFAM" id="SSF69118">
    <property type="entry name" value="AhpD-like"/>
    <property type="match status" value="1"/>
</dbReference>
<protein>
    <recommendedName>
        <fullName evidence="3">Sestrin-1</fullName>
        <ecNumber evidence="1">1.11.1.-</ecNumber>
    </recommendedName>
</protein>
<comment type="function">
    <text evidence="1">Functions as an intracellular leucine sensor that negatively regulates the TORC1 signaling pathway through the GATOR complex. In absence of leucine, binds the GATOR subcomplex GATOR2 and prevents TORC1 signaling. Binding of leucine to SESN2 disrupts its interaction with GATOR2 thereby activating the TORC1 signaling pathway. This stress-inducible metabolic regulator may also play a role in protection against oxidative and genotoxic stresses. May positively regulate the transcription by NFE2L2 of genes involved in the response to oxidative stress by facilitating the SQSTM1-mediated autophagic degradation of KEAP1. Moreover, may prevent the accumulation of reactive oxygen species (ROS) through the alkylhydroperoxide reductase activity born by the N-terminal domain of the protein. Was originally reported to contribute to oxidative stress resistance by reducing PRDX1. However, this could not be confirmed.</text>
</comment>
<comment type="catalytic activity">
    <reaction evidence="1">
        <text>a hydroperoxide + L-cysteinyl-[protein] = S-hydroxy-L-cysteinyl-[protein] + an alcohol</text>
        <dbReference type="Rhea" id="RHEA:67124"/>
        <dbReference type="Rhea" id="RHEA-COMP:10131"/>
        <dbReference type="Rhea" id="RHEA-COMP:17193"/>
        <dbReference type="ChEBI" id="CHEBI:29950"/>
        <dbReference type="ChEBI" id="CHEBI:30879"/>
        <dbReference type="ChEBI" id="CHEBI:35924"/>
        <dbReference type="ChEBI" id="CHEBI:61973"/>
    </reaction>
    <physiologicalReaction direction="left-to-right" evidence="1">
        <dbReference type="Rhea" id="RHEA:67125"/>
    </physiologicalReaction>
</comment>
<comment type="subunit">
    <text evidence="2">Interacts with the GATOR2 complex which is composed of MIOS, SEC13, SEH1L, WDR24 and WDR59; the interaction is negatively regulated by leucine. Interacts with RRAGA, RRAGB, RRAGC and RRAGD; may function as a guanine nucleotide dissociation inhibitor for RRAGs and regulate them. Interacts with KEAP1, RBX1 and SQSTM1; in the SQSTM1-dependent autophagic degradation of KEAP1. May interact with PRDX1.</text>
</comment>
<comment type="subcellular location">
    <subcellularLocation>
        <location evidence="2">Nucleus</location>
    </subcellularLocation>
    <subcellularLocation>
        <location evidence="2">Cytoplasm</location>
    </subcellularLocation>
</comment>
<comment type="domain">
    <text evidence="1">The N-terminal domain may have an alkylhydroperoxide reductase activity.</text>
</comment>
<comment type="domain">
    <text evidence="1">The C-terminal domain mediates interaction with GATOR2 through which it regulates TORC1 signaling.</text>
</comment>
<comment type="similarity">
    <text evidence="3">Belongs to the sestrin family.</text>
</comment>
<keyword id="KW-0963">Cytoplasm</keyword>
<keyword id="KW-0539">Nucleus</keyword>
<keyword id="KW-0560">Oxidoreductase</keyword>
<keyword id="KW-0597">Phosphoprotein</keyword>
<keyword id="KW-1185">Reference proteome</keyword>
<gene>
    <name evidence="1" type="primary">SESN1</name>
    <name evidence="4" type="ORF">QtsA-17454</name>
</gene>
<evidence type="ECO:0000250" key="1">
    <source>
        <dbReference type="UniProtKB" id="P58004"/>
    </source>
</evidence>
<evidence type="ECO:0000250" key="2">
    <source>
        <dbReference type="UniProtKB" id="Q9Y6P5"/>
    </source>
</evidence>
<evidence type="ECO:0000305" key="3"/>
<evidence type="ECO:0000312" key="4">
    <source>
        <dbReference type="EMBL" id="BAE01227.1"/>
    </source>
</evidence>